<comment type="subcellular location">
    <subcellularLocation>
        <location evidence="2">Periplasm</location>
    </subcellularLocation>
</comment>
<comment type="similarity">
    <text evidence="2">Belongs to the BhsA/McbA family.</text>
</comment>
<comment type="sequence caution" evidence="2">
    <conflict type="erroneous initiation">
        <sequence resource="EMBL-CDS" id="AAA58040"/>
    </conflict>
    <text>Extended N-terminus.</text>
</comment>
<keyword id="KW-0574">Periplasm</keyword>
<keyword id="KW-1185">Reference proteome</keyword>
<keyword id="KW-0732">Signal</keyword>
<name>YHCN_ECOLI</name>
<organism>
    <name type="scientific">Escherichia coli (strain K12)</name>
    <dbReference type="NCBI Taxonomy" id="83333"/>
    <lineage>
        <taxon>Bacteria</taxon>
        <taxon>Pseudomonadati</taxon>
        <taxon>Pseudomonadota</taxon>
        <taxon>Gammaproteobacteria</taxon>
        <taxon>Enterobacterales</taxon>
        <taxon>Enterobacteriaceae</taxon>
        <taxon>Escherichia</taxon>
    </lineage>
</organism>
<proteinExistence type="inferred from homology"/>
<feature type="signal peptide" evidence="1">
    <location>
        <begin position="1"/>
        <end position="22"/>
    </location>
</feature>
<feature type="chain" id="PRO_0000013921" description="Uncharacterized protein YhcN">
    <location>
        <begin position="23"/>
        <end position="87"/>
    </location>
</feature>
<evidence type="ECO:0000255" key="1"/>
<evidence type="ECO:0000305" key="2"/>
<gene>
    <name type="primary">yhcN</name>
    <name type="ordered locus">b3238</name>
    <name type="ordered locus">JW5540</name>
</gene>
<accession>P64614</accession>
<accession>P46477</accession>
<accession>Q2M8X5</accession>
<reference key="1">
    <citation type="journal article" date="1997" name="Science">
        <title>The complete genome sequence of Escherichia coli K-12.</title>
        <authorList>
            <person name="Blattner F.R."/>
            <person name="Plunkett G. III"/>
            <person name="Bloch C.A."/>
            <person name="Perna N.T."/>
            <person name="Burland V."/>
            <person name="Riley M."/>
            <person name="Collado-Vides J."/>
            <person name="Glasner J.D."/>
            <person name="Rode C.K."/>
            <person name="Mayhew G.F."/>
            <person name="Gregor J."/>
            <person name="Davis N.W."/>
            <person name="Kirkpatrick H.A."/>
            <person name="Goeden M.A."/>
            <person name="Rose D.J."/>
            <person name="Mau B."/>
            <person name="Shao Y."/>
        </authorList>
    </citation>
    <scope>NUCLEOTIDE SEQUENCE [LARGE SCALE GENOMIC DNA]</scope>
    <source>
        <strain>K12 / MG1655 / ATCC 47076</strain>
    </source>
</reference>
<reference key="2">
    <citation type="journal article" date="2006" name="Mol. Syst. Biol.">
        <title>Highly accurate genome sequences of Escherichia coli K-12 strains MG1655 and W3110.</title>
        <authorList>
            <person name="Hayashi K."/>
            <person name="Morooka N."/>
            <person name="Yamamoto Y."/>
            <person name="Fujita K."/>
            <person name="Isono K."/>
            <person name="Choi S."/>
            <person name="Ohtsubo E."/>
            <person name="Baba T."/>
            <person name="Wanner B.L."/>
            <person name="Mori H."/>
            <person name="Horiuchi T."/>
        </authorList>
    </citation>
    <scope>NUCLEOTIDE SEQUENCE [LARGE SCALE GENOMIC DNA]</scope>
    <source>
        <strain>K12 / W3110 / ATCC 27325 / DSM 5911</strain>
    </source>
</reference>
<protein>
    <recommendedName>
        <fullName>Uncharacterized protein YhcN</fullName>
    </recommendedName>
</protein>
<dbReference type="EMBL" id="U18997">
    <property type="protein sequence ID" value="AAA58040.1"/>
    <property type="status" value="ALT_INIT"/>
    <property type="molecule type" value="Genomic_DNA"/>
</dbReference>
<dbReference type="EMBL" id="U00096">
    <property type="protein sequence ID" value="AAC76270.2"/>
    <property type="molecule type" value="Genomic_DNA"/>
</dbReference>
<dbReference type="EMBL" id="AP009048">
    <property type="protein sequence ID" value="BAE77281.1"/>
    <property type="molecule type" value="Genomic_DNA"/>
</dbReference>
<dbReference type="RefSeq" id="NP_417705.2">
    <property type="nucleotide sequence ID" value="NC_000913.3"/>
</dbReference>
<dbReference type="RefSeq" id="WP_000695690.1">
    <property type="nucleotide sequence ID" value="NZ_SSZK01000034.1"/>
</dbReference>
<dbReference type="SMR" id="P64614"/>
<dbReference type="BioGRID" id="4259435">
    <property type="interactions" value="32"/>
</dbReference>
<dbReference type="FunCoup" id="P64614">
    <property type="interactions" value="2"/>
</dbReference>
<dbReference type="STRING" id="511145.b3238"/>
<dbReference type="PaxDb" id="511145-b3238"/>
<dbReference type="EnsemblBacteria" id="AAC76270">
    <property type="protein sequence ID" value="AAC76270"/>
    <property type="gene ID" value="b3238"/>
</dbReference>
<dbReference type="GeneID" id="86948102"/>
<dbReference type="GeneID" id="947835"/>
<dbReference type="KEGG" id="ecj:JW5540"/>
<dbReference type="KEGG" id="eco:b3238"/>
<dbReference type="KEGG" id="ecoc:C3026_17615"/>
<dbReference type="PATRIC" id="fig|511145.12.peg.3335"/>
<dbReference type="EchoBASE" id="EB2671"/>
<dbReference type="eggNOG" id="ENOG5031NM5">
    <property type="taxonomic scope" value="Bacteria"/>
</dbReference>
<dbReference type="HOGENOM" id="CLU_158602_2_2_6"/>
<dbReference type="InParanoid" id="P64614"/>
<dbReference type="OMA" id="NGNYHAT"/>
<dbReference type="OrthoDB" id="6540189at2"/>
<dbReference type="PhylomeDB" id="P64614"/>
<dbReference type="BioCyc" id="EcoCyc:G7683-MONOMER"/>
<dbReference type="PRO" id="PR:P64614"/>
<dbReference type="Proteomes" id="UP000000625">
    <property type="component" value="Chromosome"/>
</dbReference>
<dbReference type="GO" id="GO:0042597">
    <property type="term" value="C:periplasmic space"/>
    <property type="evidence" value="ECO:0007669"/>
    <property type="project" value="UniProtKB-SubCell"/>
</dbReference>
<dbReference type="GO" id="GO:0071468">
    <property type="term" value="P:cellular response to acidic pH"/>
    <property type="evidence" value="ECO:0000270"/>
    <property type="project" value="EcoCyc"/>
</dbReference>
<dbReference type="GO" id="GO:0070301">
    <property type="term" value="P:cellular response to hydrogen peroxide"/>
    <property type="evidence" value="ECO:0000315"/>
    <property type="project" value="EcoCyc"/>
</dbReference>
<dbReference type="GO" id="GO:0006950">
    <property type="term" value="P:response to stress"/>
    <property type="evidence" value="ECO:0000318"/>
    <property type="project" value="GO_Central"/>
</dbReference>
<dbReference type="GO" id="GO:0044011">
    <property type="term" value="P:single-species biofilm formation on inanimate substrate"/>
    <property type="evidence" value="ECO:0000315"/>
    <property type="project" value="EcoCyc"/>
</dbReference>
<dbReference type="FunFam" id="3.30.1660.10:FF:000001">
    <property type="entry name" value="Multiple stress resistance protein BhsA"/>
    <property type="match status" value="1"/>
</dbReference>
<dbReference type="Gene3D" id="3.30.1660.10">
    <property type="entry name" value="Flavin-binding protein dodecin"/>
    <property type="match status" value="1"/>
</dbReference>
<dbReference type="InterPro" id="IPR051096">
    <property type="entry name" value="BhsA/McbA_stress_biofilm_assoc"/>
</dbReference>
<dbReference type="InterPro" id="IPR025543">
    <property type="entry name" value="Dodecin-like"/>
</dbReference>
<dbReference type="InterPro" id="IPR047775">
    <property type="entry name" value="Stress_YhcN-like"/>
</dbReference>
<dbReference type="InterPro" id="IPR036275">
    <property type="entry name" value="YdgH-like_sf"/>
</dbReference>
<dbReference type="InterPro" id="IPR010854">
    <property type="entry name" value="YdgH/BhsA/McbA-like_dom"/>
</dbReference>
<dbReference type="NCBIfam" id="NF033776">
    <property type="entry name" value="stress_YhcN"/>
    <property type="match status" value="1"/>
</dbReference>
<dbReference type="PANTHER" id="PTHR34156:SF5">
    <property type="entry name" value="OUTER MEMBRANE PROTEIN"/>
    <property type="match status" value="1"/>
</dbReference>
<dbReference type="PANTHER" id="PTHR34156">
    <property type="entry name" value="OUTER MEMBRANE PROTEIN-RELATED-RELATED"/>
    <property type="match status" value="1"/>
</dbReference>
<dbReference type="Pfam" id="PF07338">
    <property type="entry name" value="YdgH_BhsA-like"/>
    <property type="match status" value="1"/>
</dbReference>
<dbReference type="SUPFAM" id="SSF159871">
    <property type="entry name" value="YdgH-like"/>
    <property type="match status" value="1"/>
</dbReference>
<sequence length="87" mass="9196">MKIKTTVAALSVLSVLSFGAFAADSIDAAQAQNREAIGTVSVSGVASSPMDMREMLNKKAEEKGATAYQITEARSGDTWHATAELYK</sequence>